<evidence type="ECO:0000255" key="1">
    <source>
        <dbReference type="HAMAP-Rule" id="MF_00086"/>
    </source>
</evidence>
<keyword id="KW-0067">ATP-binding</keyword>
<keyword id="KW-0963">Cytoplasm</keyword>
<keyword id="KW-0460">Magnesium</keyword>
<keyword id="KW-0479">Metal-binding</keyword>
<keyword id="KW-0547">Nucleotide-binding</keyword>
<keyword id="KW-0554">One-carbon metabolism</keyword>
<keyword id="KW-0630">Potassium</keyword>
<keyword id="KW-0808">Transferase</keyword>
<name>METK_BACC2</name>
<accession>B7IL28</accession>
<reference key="1">
    <citation type="submission" date="2008-10" db="EMBL/GenBank/DDBJ databases">
        <title>Genome sequence of Bacillus cereus G9842.</title>
        <authorList>
            <person name="Dodson R.J."/>
            <person name="Durkin A.S."/>
            <person name="Rosovitz M.J."/>
            <person name="Rasko D.A."/>
            <person name="Hoffmaster A."/>
            <person name="Ravel J."/>
            <person name="Sutton G."/>
        </authorList>
    </citation>
    <scope>NUCLEOTIDE SEQUENCE [LARGE SCALE GENOMIC DNA]</scope>
    <source>
        <strain>G9842</strain>
    </source>
</reference>
<dbReference type="EC" id="2.5.1.6" evidence="1"/>
<dbReference type="EMBL" id="CP001186">
    <property type="protein sequence ID" value="ACK94187.1"/>
    <property type="molecule type" value="Genomic_DNA"/>
</dbReference>
<dbReference type="RefSeq" id="WP_000163117.1">
    <property type="nucleotide sequence ID" value="NC_011772.1"/>
</dbReference>
<dbReference type="SMR" id="B7IL28"/>
<dbReference type="GeneID" id="72451422"/>
<dbReference type="KEGG" id="bcg:BCG9842_B0363"/>
<dbReference type="HOGENOM" id="CLU_041802_1_1_9"/>
<dbReference type="UniPathway" id="UPA00315">
    <property type="reaction ID" value="UER00080"/>
</dbReference>
<dbReference type="Proteomes" id="UP000006744">
    <property type="component" value="Chromosome"/>
</dbReference>
<dbReference type="GO" id="GO:0005737">
    <property type="term" value="C:cytoplasm"/>
    <property type="evidence" value="ECO:0007669"/>
    <property type="project" value="UniProtKB-SubCell"/>
</dbReference>
<dbReference type="GO" id="GO:0005524">
    <property type="term" value="F:ATP binding"/>
    <property type="evidence" value="ECO:0007669"/>
    <property type="project" value="UniProtKB-UniRule"/>
</dbReference>
<dbReference type="GO" id="GO:0000287">
    <property type="term" value="F:magnesium ion binding"/>
    <property type="evidence" value="ECO:0007669"/>
    <property type="project" value="UniProtKB-UniRule"/>
</dbReference>
<dbReference type="GO" id="GO:0004478">
    <property type="term" value="F:methionine adenosyltransferase activity"/>
    <property type="evidence" value="ECO:0007669"/>
    <property type="project" value="UniProtKB-UniRule"/>
</dbReference>
<dbReference type="GO" id="GO:0006730">
    <property type="term" value="P:one-carbon metabolic process"/>
    <property type="evidence" value="ECO:0007669"/>
    <property type="project" value="UniProtKB-KW"/>
</dbReference>
<dbReference type="GO" id="GO:0006556">
    <property type="term" value="P:S-adenosylmethionine biosynthetic process"/>
    <property type="evidence" value="ECO:0007669"/>
    <property type="project" value="UniProtKB-UniRule"/>
</dbReference>
<dbReference type="CDD" id="cd18079">
    <property type="entry name" value="S-AdoMet_synt"/>
    <property type="match status" value="1"/>
</dbReference>
<dbReference type="FunFam" id="3.30.300.10:FF:000003">
    <property type="entry name" value="S-adenosylmethionine synthase"/>
    <property type="match status" value="1"/>
</dbReference>
<dbReference type="FunFam" id="3.30.300.10:FF:000004">
    <property type="entry name" value="S-adenosylmethionine synthase"/>
    <property type="match status" value="1"/>
</dbReference>
<dbReference type="Gene3D" id="3.30.300.10">
    <property type="match status" value="3"/>
</dbReference>
<dbReference type="HAMAP" id="MF_00086">
    <property type="entry name" value="S_AdoMet_synth1"/>
    <property type="match status" value="1"/>
</dbReference>
<dbReference type="InterPro" id="IPR022631">
    <property type="entry name" value="ADOMET_SYNTHASE_CS"/>
</dbReference>
<dbReference type="InterPro" id="IPR022630">
    <property type="entry name" value="S-AdoMet_synt_C"/>
</dbReference>
<dbReference type="InterPro" id="IPR022629">
    <property type="entry name" value="S-AdoMet_synt_central"/>
</dbReference>
<dbReference type="InterPro" id="IPR022628">
    <property type="entry name" value="S-AdoMet_synt_N"/>
</dbReference>
<dbReference type="InterPro" id="IPR002133">
    <property type="entry name" value="S-AdoMet_synthetase"/>
</dbReference>
<dbReference type="InterPro" id="IPR022636">
    <property type="entry name" value="S-AdoMet_synthetase_sfam"/>
</dbReference>
<dbReference type="NCBIfam" id="TIGR01034">
    <property type="entry name" value="metK"/>
    <property type="match status" value="1"/>
</dbReference>
<dbReference type="PANTHER" id="PTHR11964">
    <property type="entry name" value="S-ADENOSYLMETHIONINE SYNTHETASE"/>
    <property type="match status" value="1"/>
</dbReference>
<dbReference type="Pfam" id="PF02773">
    <property type="entry name" value="S-AdoMet_synt_C"/>
    <property type="match status" value="1"/>
</dbReference>
<dbReference type="Pfam" id="PF02772">
    <property type="entry name" value="S-AdoMet_synt_M"/>
    <property type="match status" value="1"/>
</dbReference>
<dbReference type="Pfam" id="PF00438">
    <property type="entry name" value="S-AdoMet_synt_N"/>
    <property type="match status" value="1"/>
</dbReference>
<dbReference type="PIRSF" id="PIRSF000497">
    <property type="entry name" value="MAT"/>
    <property type="match status" value="1"/>
</dbReference>
<dbReference type="SUPFAM" id="SSF55973">
    <property type="entry name" value="S-adenosylmethionine synthetase"/>
    <property type="match status" value="3"/>
</dbReference>
<dbReference type="PROSITE" id="PS00376">
    <property type="entry name" value="ADOMET_SYNTHASE_1"/>
    <property type="match status" value="1"/>
</dbReference>
<dbReference type="PROSITE" id="PS00377">
    <property type="entry name" value="ADOMET_SYNTHASE_2"/>
    <property type="match status" value="1"/>
</dbReference>
<comment type="function">
    <text evidence="1">Catalyzes the formation of S-adenosylmethionine (AdoMet) from methionine and ATP. The overall synthetic reaction is composed of two sequential steps, AdoMet formation and the subsequent tripolyphosphate hydrolysis which occurs prior to release of AdoMet from the enzyme.</text>
</comment>
<comment type="catalytic activity">
    <reaction evidence="1">
        <text>L-methionine + ATP + H2O = S-adenosyl-L-methionine + phosphate + diphosphate</text>
        <dbReference type="Rhea" id="RHEA:21080"/>
        <dbReference type="ChEBI" id="CHEBI:15377"/>
        <dbReference type="ChEBI" id="CHEBI:30616"/>
        <dbReference type="ChEBI" id="CHEBI:33019"/>
        <dbReference type="ChEBI" id="CHEBI:43474"/>
        <dbReference type="ChEBI" id="CHEBI:57844"/>
        <dbReference type="ChEBI" id="CHEBI:59789"/>
        <dbReference type="EC" id="2.5.1.6"/>
    </reaction>
</comment>
<comment type="cofactor">
    <cofactor evidence="1">
        <name>Mg(2+)</name>
        <dbReference type="ChEBI" id="CHEBI:18420"/>
    </cofactor>
    <text evidence="1">Binds 2 divalent ions per subunit.</text>
</comment>
<comment type="cofactor">
    <cofactor evidence="1">
        <name>K(+)</name>
        <dbReference type="ChEBI" id="CHEBI:29103"/>
    </cofactor>
    <text evidence="1">Binds 1 potassium ion per subunit.</text>
</comment>
<comment type="pathway">
    <text evidence="1">Amino-acid biosynthesis; S-adenosyl-L-methionine biosynthesis; S-adenosyl-L-methionine from L-methionine: step 1/1.</text>
</comment>
<comment type="subunit">
    <text evidence="1">Homotetramer; dimer of dimers.</text>
</comment>
<comment type="subcellular location">
    <subcellularLocation>
        <location evidence="1">Cytoplasm</location>
    </subcellularLocation>
</comment>
<comment type="similarity">
    <text evidence="1">Belongs to the AdoMet synthase family.</text>
</comment>
<gene>
    <name evidence="1" type="primary">metK</name>
    <name type="ordered locus">BCG9842_B0363</name>
</gene>
<organism>
    <name type="scientific">Bacillus cereus (strain G9842)</name>
    <dbReference type="NCBI Taxonomy" id="405531"/>
    <lineage>
        <taxon>Bacteria</taxon>
        <taxon>Bacillati</taxon>
        <taxon>Bacillota</taxon>
        <taxon>Bacilli</taxon>
        <taxon>Bacillales</taxon>
        <taxon>Bacillaceae</taxon>
        <taxon>Bacillus</taxon>
        <taxon>Bacillus cereus group</taxon>
    </lineage>
</organism>
<feature type="chain" id="PRO_1000196688" description="S-adenosylmethionine synthase">
    <location>
        <begin position="1"/>
        <end position="399"/>
    </location>
</feature>
<feature type="region of interest" description="Flexible loop" evidence="1">
    <location>
        <begin position="101"/>
        <end position="111"/>
    </location>
</feature>
<feature type="binding site" description="in other chain" evidence="1">
    <location>
        <position position="17"/>
    </location>
    <ligand>
        <name>ATP</name>
        <dbReference type="ChEBI" id="CHEBI:30616"/>
        <note>ligand shared between two neighboring subunits</note>
    </ligand>
</feature>
<feature type="binding site" evidence="1">
    <location>
        <position position="19"/>
    </location>
    <ligand>
        <name>Mg(2+)</name>
        <dbReference type="ChEBI" id="CHEBI:18420"/>
    </ligand>
</feature>
<feature type="binding site" evidence="1">
    <location>
        <position position="45"/>
    </location>
    <ligand>
        <name>K(+)</name>
        <dbReference type="ChEBI" id="CHEBI:29103"/>
    </ligand>
</feature>
<feature type="binding site" description="in other chain" evidence="1">
    <location>
        <position position="58"/>
    </location>
    <ligand>
        <name>L-methionine</name>
        <dbReference type="ChEBI" id="CHEBI:57844"/>
        <note>ligand shared between two neighboring subunits</note>
    </ligand>
</feature>
<feature type="binding site" description="in other chain" evidence="1">
    <location>
        <position position="101"/>
    </location>
    <ligand>
        <name>L-methionine</name>
        <dbReference type="ChEBI" id="CHEBI:57844"/>
        <note>ligand shared between two neighboring subunits</note>
    </ligand>
</feature>
<feature type="binding site" description="in other chain" evidence="1">
    <location>
        <begin position="177"/>
        <end position="179"/>
    </location>
    <ligand>
        <name>ATP</name>
        <dbReference type="ChEBI" id="CHEBI:30616"/>
        <note>ligand shared between two neighboring subunits</note>
    </ligand>
</feature>
<feature type="binding site" description="in other chain" evidence="1">
    <location>
        <begin position="244"/>
        <end position="245"/>
    </location>
    <ligand>
        <name>ATP</name>
        <dbReference type="ChEBI" id="CHEBI:30616"/>
        <note>ligand shared between two neighboring subunits</note>
    </ligand>
</feature>
<feature type="binding site" evidence="1">
    <location>
        <position position="253"/>
    </location>
    <ligand>
        <name>ATP</name>
        <dbReference type="ChEBI" id="CHEBI:30616"/>
        <note>ligand shared between two neighboring subunits</note>
    </ligand>
</feature>
<feature type="binding site" evidence="1">
    <location>
        <position position="253"/>
    </location>
    <ligand>
        <name>L-methionine</name>
        <dbReference type="ChEBI" id="CHEBI:57844"/>
        <note>ligand shared between two neighboring subunits</note>
    </ligand>
</feature>
<feature type="binding site" description="in other chain" evidence="1">
    <location>
        <begin position="259"/>
        <end position="260"/>
    </location>
    <ligand>
        <name>ATP</name>
        <dbReference type="ChEBI" id="CHEBI:30616"/>
        <note>ligand shared between two neighboring subunits</note>
    </ligand>
</feature>
<feature type="binding site" evidence="1">
    <location>
        <position position="276"/>
    </location>
    <ligand>
        <name>ATP</name>
        <dbReference type="ChEBI" id="CHEBI:30616"/>
        <note>ligand shared between two neighboring subunits</note>
    </ligand>
</feature>
<feature type="binding site" evidence="1">
    <location>
        <position position="280"/>
    </location>
    <ligand>
        <name>ATP</name>
        <dbReference type="ChEBI" id="CHEBI:30616"/>
        <note>ligand shared between two neighboring subunits</note>
    </ligand>
</feature>
<feature type="binding site" description="in other chain" evidence="1">
    <location>
        <position position="284"/>
    </location>
    <ligand>
        <name>L-methionine</name>
        <dbReference type="ChEBI" id="CHEBI:57844"/>
        <note>ligand shared between two neighboring subunits</note>
    </ligand>
</feature>
<sequence>MTKKRHLFTSESVTEGHPDKICDQISDSILDAILSKDANARVACETTVTTGLVLVAGEITTSTYVDIPKIVRETIQGIGYTRAKYGFDAETCAVLTSIDEQSADIAMGVDQALEAREGQMTDAEIEAIGAGDQGLMFGFACNETQELMPLPISLAHKLARRLTEVRKDDTLSYLRPDGKTQVTVEYDENGKPVRVDTIVISTQHHPDVTWEEIDRDLKEHVIKAVVPAELMDGETKFFINPTGRFVIGGPQGDAGLTGRKIIVDTYGGYARHGGGAFSGKDATKVDRSAAYAARYVAKNIVAAGLADKAEVQLAYAIGVAQPVSISVDTFGTGKVSEDVLVELVRNNFDLRPAGIIKMLDLRRPIYKQTAAYGHFGRTDVDLSWERTDKAAALKEQAGL</sequence>
<proteinExistence type="inferred from homology"/>
<protein>
    <recommendedName>
        <fullName evidence="1">S-adenosylmethionine synthase</fullName>
        <shortName evidence="1">AdoMet synthase</shortName>
        <ecNumber evidence="1">2.5.1.6</ecNumber>
    </recommendedName>
    <alternativeName>
        <fullName evidence="1">MAT</fullName>
    </alternativeName>
    <alternativeName>
        <fullName evidence="1">Methionine adenosyltransferase</fullName>
    </alternativeName>
</protein>